<name>MOC2B_ASPOR</name>
<feature type="chain" id="PRO_0000369353" description="Molybdopterin synthase catalytic subunit">
    <location>
        <begin position="1"/>
        <end position="179"/>
    </location>
</feature>
<feature type="region of interest" description="Disordered" evidence="2">
    <location>
        <begin position="1"/>
        <end position="21"/>
    </location>
</feature>
<feature type="compositionally biased region" description="Polar residues" evidence="2">
    <location>
        <begin position="1"/>
        <end position="10"/>
    </location>
</feature>
<feature type="binding site" evidence="1">
    <location>
        <begin position="127"/>
        <end position="128"/>
    </location>
    <ligand>
        <name>substrate</name>
    </ligand>
</feature>
<feature type="binding site" evidence="1">
    <location>
        <position position="143"/>
    </location>
    <ligand>
        <name>substrate</name>
    </ligand>
</feature>
<feature type="binding site" evidence="1">
    <location>
        <begin position="150"/>
        <end position="152"/>
    </location>
    <ligand>
        <name>substrate</name>
    </ligand>
</feature>
<dbReference type="EC" id="2.8.1.12" evidence="1"/>
<dbReference type="EMBL" id="BA000054">
    <property type="protein sequence ID" value="BAE63403.1"/>
    <property type="molecule type" value="Genomic_DNA"/>
</dbReference>
<dbReference type="RefSeq" id="XP_001824536.1">
    <property type="nucleotide sequence ID" value="XM_001824484.2"/>
</dbReference>
<dbReference type="SMR" id="Q2U4W2"/>
<dbReference type="STRING" id="510516.Q2U4W2"/>
<dbReference type="EnsemblFungi" id="BAE63403">
    <property type="protein sequence ID" value="BAE63403"/>
    <property type="gene ID" value="AO090020000179"/>
</dbReference>
<dbReference type="GeneID" id="5996622"/>
<dbReference type="KEGG" id="aor:AO090020000179"/>
<dbReference type="VEuPathDB" id="FungiDB:AO090020000179"/>
<dbReference type="HOGENOM" id="CLU_089568_3_1_1"/>
<dbReference type="OMA" id="WKHQFFA"/>
<dbReference type="OrthoDB" id="27286at5052"/>
<dbReference type="UniPathway" id="UPA00344"/>
<dbReference type="Proteomes" id="UP000006564">
    <property type="component" value="Chromosome 6"/>
</dbReference>
<dbReference type="GO" id="GO:1990140">
    <property type="term" value="C:molybdopterin synthase complex"/>
    <property type="evidence" value="ECO:0000250"/>
    <property type="project" value="UniProtKB"/>
</dbReference>
<dbReference type="GO" id="GO:0030366">
    <property type="term" value="F:molybdopterin synthase activity"/>
    <property type="evidence" value="ECO:0007669"/>
    <property type="project" value="UniProtKB-UniRule"/>
</dbReference>
<dbReference type="GO" id="GO:0006777">
    <property type="term" value="P:Mo-molybdopterin cofactor biosynthetic process"/>
    <property type="evidence" value="ECO:0000250"/>
    <property type="project" value="UniProtKB"/>
</dbReference>
<dbReference type="CDD" id="cd00756">
    <property type="entry name" value="MoaE"/>
    <property type="match status" value="1"/>
</dbReference>
<dbReference type="FunFam" id="3.90.1170.40:FF:000003">
    <property type="entry name" value="Molybdopterin converting factor subunit 2"/>
    <property type="match status" value="1"/>
</dbReference>
<dbReference type="Gene3D" id="3.90.1170.40">
    <property type="entry name" value="Molybdopterin biosynthesis MoaE subunit"/>
    <property type="match status" value="1"/>
</dbReference>
<dbReference type="HAMAP" id="MF_03052">
    <property type="entry name" value="MOC2B"/>
    <property type="match status" value="1"/>
</dbReference>
<dbReference type="InterPro" id="IPR036563">
    <property type="entry name" value="MoaE_sf"/>
</dbReference>
<dbReference type="InterPro" id="IPR028888">
    <property type="entry name" value="MOCS2B_euk"/>
</dbReference>
<dbReference type="InterPro" id="IPR003448">
    <property type="entry name" value="Mopterin_biosynth_MoaE"/>
</dbReference>
<dbReference type="PANTHER" id="PTHR23404">
    <property type="entry name" value="MOLYBDOPTERIN SYNTHASE RELATED"/>
    <property type="match status" value="1"/>
</dbReference>
<dbReference type="Pfam" id="PF02391">
    <property type="entry name" value="MoaE"/>
    <property type="match status" value="1"/>
</dbReference>
<dbReference type="SUPFAM" id="SSF54690">
    <property type="entry name" value="Molybdopterin synthase subunit MoaE"/>
    <property type="match status" value="1"/>
</dbReference>
<organism>
    <name type="scientific">Aspergillus oryzae (strain ATCC 42149 / RIB 40)</name>
    <name type="common">Yellow koji mold</name>
    <dbReference type="NCBI Taxonomy" id="510516"/>
    <lineage>
        <taxon>Eukaryota</taxon>
        <taxon>Fungi</taxon>
        <taxon>Dikarya</taxon>
        <taxon>Ascomycota</taxon>
        <taxon>Pezizomycotina</taxon>
        <taxon>Eurotiomycetes</taxon>
        <taxon>Eurotiomycetidae</taxon>
        <taxon>Eurotiales</taxon>
        <taxon>Aspergillaceae</taxon>
        <taxon>Aspergillus</taxon>
        <taxon>Aspergillus subgen. Circumdati</taxon>
    </lineage>
</organism>
<protein>
    <recommendedName>
        <fullName evidence="1">Molybdopterin synthase catalytic subunit</fullName>
        <ecNumber evidence="1">2.8.1.12</ecNumber>
    </recommendedName>
    <alternativeName>
        <fullName evidence="1">Common component for nitrate reductase and xanthine dehydrogenase protein H</fullName>
    </alternativeName>
    <alternativeName>
        <fullName evidence="1">Molybdenum cofactor synthesis protein 2 large subunit</fullName>
    </alternativeName>
    <alternativeName>
        <fullName evidence="1">Molybdenum cofactor synthesis protein 2B</fullName>
        <shortName evidence="1">MOCS2B</shortName>
    </alternativeName>
</protein>
<evidence type="ECO:0000255" key="1">
    <source>
        <dbReference type="HAMAP-Rule" id="MF_03052"/>
    </source>
</evidence>
<evidence type="ECO:0000256" key="2">
    <source>
        <dbReference type="SAM" id="MobiDB-lite"/>
    </source>
</evidence>
<proteinExistence type="inferred from homology"/>
<accession>Q2U4W2</accession>
<comment type="function">
    <text evidence="1">Catalytic subunit of the molybdopterin synthase complex, a complex that catalyzes the conversion of precursor Z into molybdopterin. Acts by mediating the incorporation of 2 sulfur atoms from thiocarboxylated MOCS2A into precursor Z to generate a dithiolene group.</text>
</comment>
<comment type="catalytic activity">
    <reaction evidence="1">
        <text>2 [molybdopterin-synthase sulfur-carrier protein]-C-terminal-Gly-aminoethanethioate + cyclic pyranopterin phosphate + H2O = molybdopterin + 2 [molybdopterin-synthase sulfur-carrier protein]-C-terminal Gly-Gly + 2 H(+)</text>
        <dbReference type="Rhea" id="RHEA:26333"/>
        <dbReference type="Rhea" id="RHEA-COMP:12202"/>
        <dbReference type="Rhea" id="RHEA-COMP:19907"/>
        <dbReference type="ChEBI" id="CHEBI:15377"/>
        <dbReference type="ChEBI" id="CHEBI:15378"/>
        <dbReference type="ChEBI" id="CHEBI:58698"/>
        <dbReference type="ChEBI" id="CHEBI:59648"/>
        <dbReference type="ChEBI" id="CHEBI:90778"/>
        <dbReference type="ChEBI" id="CHEBI:232372"/>
        <dbReference type="EC" id="2.8.1.12"/>
    </reaction>
</comment>
<comment type="pathway">
    <text evidence="1">Cofactor biosynthesis; molybdopterin biosynthesis.</text>
</comment>
<comment type="subunit">
    <text evidence="1">Heterotetramer; composed of 2 small (MOCS2A) and 2 large (MOCS2B) subunits.</text>
</comment>
<comment type="subcellular location">
    <subcellularLocation>
        <location evidence="1">Cytoplasm</location>
    </subcellularLocation>
</comment>
<comment type="similarity">
    <text evidence="1">Belongs to the MoaE family. MOCS2B subfamily.</text>
</comment>
<keyword id="KW-0963">Cytoplasm</keyword>
<keyword id="KW-0501">Molybdenum cofactor biosynthesis</keyword>
<keyword id="KW-1185">Reference proteome</keyword>
<keyword id="KW-0808">Transferase</keyword>
<sequence>MTTSEDQTTPAHLDPKTYPRHLTDPTQNIHLELTYSPLNAQSALDKISSPAAGANVLFLGTTRNTFEDRAVSQLSYTAYPPLTLKTLAGIARDAVAKHGLTGIVIAHRLGVVPIREASIVIAVSSGHRRAAWRAGEEVLEICKEKAEIWKREEFVDGGMEWRENRERDGEGKKVVVSEN</sequence>
<reference key="1">
    <citation type="journal article" date="2005" name="Nature">
        <title>Genome sequencing and analysis of Aspergillus oryzae.</title>
        <authorList>
            <person name="Machida M."/>
            <person name="Asai K."/>
            <person name="Sano M."/>
            <person name="Tanaka T."/>
            <person name="Kumagai T."/>
            <person name="Terai G."/>
            <person name="Kusumoto K."/>
            <person name="Arima T."/>
            <person name="Akita O."/>
            <person name="Kashiwagi Y."/>
            <person name="Abe K."/>
            <person name="Gomi K."/>
            <person name="Horiuchi H."/>
            <person name="Kitamoto K."/>
            <person name="Kobayashi T."/>
            <person name="Takeuchi M."/>
            <person name="Denning D.W."/>
            <person name="Galagan J.E."/>
            <person name="Nierman W.C."/>
            <person name="Yu J."/>
            <person name="Archer D.B."/>
            <person name="Bennett J.W."/>
            <person name="Bhatnagar D."/>
            <person name="Cleveland T.E."/>
            <person name="Fedorova N.D."/>
            <person name="Gotoh O."/>
            <person name="Horikawa H."/>
            <person name="Hosoyama A."/>
            <person name="Ichinomiya M."/>
            <person name="Igarashi R."/>
            <person name="Iwashita K."/>
            <person name="Juvvadi P.R."/>
            <person name="Kato M."/>
            <person name="Kato Y."/>
            <person name="Kin T."/>
            <person name="Kokubun A."/>
            <person name="Maeda H."/>
            <person name="Maeyama N."/>
            <person name="Maruyama J."/>
            <person name="Nagasaki H."/>
            <person name="Nakajima T."/>
            <person name="Oda K."/>
            <person name="Okada K."/>
            <person name="Paulsen I."/>
            <person name="Sakamoto K."/>
            <person name="Sawano T."/>
            <person name="Takahashi M."/>
            <person name="Takase K."/>
            <person name="Terabayashi Y."/>
            <person name="Wortman J.R."/>
            <person name="Yamada O."/>
            <person name="Yamagata Y."/>
            <person name="Anazawa H."/>
            <person name="Hata Y."/>
            <person name="Koide Y."/>
            <person name="Komori T."/>
            <person name="Koyama Y."/>
            <person name="Minetoki T."/>
            <person name="Suharnan S."/>
            <person name="Tanaka A."/>
            <person name="Isono K."/>
            <person name="Kuhara S."/>
            <person name="Ogasawara N."/>
            <person name="Kikuchi H."/>
        </authorList>
    </citation>
    <scope>NUCLEOTIDE SEQUENCE [LARGE SCALE GENOMIC DNA]</scope>
    <source>
        <strain>ATCC 42149 / RIB 40</strain>
    </source>
</reference>
<gene>
    <name evidence="1" type="primary">cnxH</name>
    <name type="ORF">AO090020000179</name>
</gene>